<comment type="function">
    <text>Involved in allosteric regulation of aspartate carbamoyltransferase.</text>
</comment>
<comment type="cofactor">
    <cofactor>
        <name>Zn(2+)</name>
        <dbReference type="ChEBI" id="CHEBI:29105"/>
    </cofactor>
    <text>Binds 1 zinc ion per subunit.</text>
</comment>
<comment type="subunit">
    <text>Heterododecamer (2C3:3R2) of six catalytic PyrB chains organized as two trimers (C3), and six regulatory PyrI chains organized as three dimers (R2).</text>
</comment>
<comment type="similarity">
    <text evidence="2">Belongs to the PyrI family.</text>
</comment>
<name>PYRI_SALTY</name>
<keyword id="KW-0479">Metal-binding</keyword>
<keyword id="KW-0665">Pyrimidine biosynthesis</keyword>
<keyword id="KW-1185">Reference proteome</keyword>
<keyword id="KW-0862">Zinc</keyword>
<sequence>MTHDNKLQVEAIKCGTVIDHIPAQVGFKLLSLFKLTETDQRITIGLNLPSGEMGRKDLIKIENTFLTEEQVNQLALYAPQATVNRIDNYDVVGKSRPSLPERINNVLVCPNSNCISHAEPVSSSFAVKKRANDIALKCKYCEKEFSHYVVLAN</sequence>
<reference key="1">
    <citation type="journal article" date="1987" name="Eur. J. Biochem.">
        <title>Cloning, nucleotide sequence and expression of the pyrBI operon of Salmonella typhimurium LT2.</title>
        <authorList>
            <person name="Michaels G."/>
            <person name="Kelln R.A."/>
            <person name="Nargang F.E."/>
        </authorList>
    </citation>
    <scope>NUCLEOTIDE SEQUENCE [GENOMIC DNA]</scope>
    <source>
        <strain>LT2</strain>
    </source>
</reference>
<reference key="2">
    <citation type="journal article" date="2001" name="Nature">
        <title>Complete genome sequence of Salmonella enterica serovar Typhimurium LT2.</title>
        <authorList>
            <person name="McClelland M."/>
            <person name="Sanderson K.E."/>
            <person name="Spieth J."/>
            <person name="Clifton S.W."/>
            <person name="Latreille P."/>
            <person name="Courtney L."/>
            <person name="Porwollik S."/>
            <person name="Ali J."/>
            <person name="Dante M."/>
            <person name="Du F."/>
            <person name="Hou S."/>
            <person name="Layman D."/>
            <person name="Leonard S."/>
            <person name="Nguyen C."/>
            <person name="Scott K."/>
            <person name="Holmes A."/>
            <person name="Grewal N."/>
            <person name="Mulvaney E."/>
            <person name="Ryan E."/>
            <person name="Sun H."/>
            <person name="Florea L."/>
            <person name="Miller W."/>
            <person name="Stoneking T."/>
            <person name="Nhan M."/>
            <person name="Waterston R."/>
            <person name="Wilson R.K."/>
        </authorList>
    </citation>
    <scope>NUCLEOTIDE SEQUENCE [LARGE SCALE GENOMIC DNA]</scope>
    <source>
        <strain>LT2 / SGSC1412 / ATCC 700720</strain>
    </source>
</reference>
<accession>P08421</accession>
<dbReference type="EMBL" id="X05641">
    <property type="protein sequence ID" value="CAA29130.1"/>
    <property type="molecule type" value="Genomic_DNA"/>
</dbReference>
<dbReference type="EMBL" id="AE006468">
    <property type="protein sequence ID" value="AAL23278.1"/>
    <property type="molecule type" value="Genomic_DNA"/>
</dbReference>
<dbReference type="PIR" id="S00050">
    <property type="entry name" value="DTEBCT"/>
</dbReference>
<dbReference type="RefSeq" id="NP_463319.1">
    <property type="nucleotide sequence ID" value="NC_003197.2"/>
</dbReference>
<dbReference type="RefSeq" id="WP_000148570.1">
    <property type="nucleotide sequence ID" value="NC_003197.2"/>
</dbReference>
<dbReference type="SMR" id="P08421"/>
<dbReference type="STRING" id="99287.STM4459"/>
<dbReference type="PaxDb" id="99287-STM4459"/>
<dbReference type="GeneID" id="1255985"/>
<dbReference type="KEGG" id="stm:STM4459"/>
<dbReference type="PATRIC" id="fig|99287.12.peg.4692"/>
<dbReference type="HOGENOM" id="CLU_128576_0_0_6"/>
<dbReference type="OMA" id="CPNRNCI"/>
<dbReference type="PhylomeDB" id="P08421"/>
<dbReference type="BioCyc" id="SENT99287:STM4459-MONOMER"/>
<dbReference type="Proteomes" id="UP000001014">
    <property type="component" value="Chromosome"/>
</dbReference>
<dbReference type="GO" id="GO:0009347">
    <property type="term" value="C:aspartate carbamoyltransferase complex"/>
    <property type="evidence" value="ECO:0000318"/>
    <property type="project" value="GO_Central"/>
</dbReference>
<dbReference type="GO" id="GO:0046872">
    <property type="term" value="F:metal ion binding"/>
    <property type="evidence" value="ECO:0007669"/>
    <property type="project" value="UniProtKB-KW"/>
</dbReference>
<dbReference type="GO" id="GO:0006207">
    <property type="term" value="P:'de novo' pyrimidine nucleobase biosynthetic process"/>
    <property type="evidence" value="ECO:0000318"/>
    <property type="project" value="GO_Central"/>
</dbReference>
<dbReference type="GO" id="GO:0006221">
    <property type="term" value="P:pyrimidine nucleotide biosynthetic process"/>
    <property type="evidence" value="ECO:0007669"/>
    <property type="project" value="UniProtKB-UniRule"/>
</dbReference>
<dbReference type="FunFam" id="2.30.30.20:FF:000001">
    <property type="entry name" value="Aspartate carbamoyltransferase regulatory chain"/>
    <property type="match status" value="1"/>
</dbReference>
<dbReference type="FunFam" id="3.30.70.140:FF:000001">
    <property type="entry name" value="Aspartate carbamoyltransferase regulatory chain"/>
    <property type="match status" value="1"/>
</dbReference>
<dbReference type="Gene3D" id="2.30.30.20">
    <property type="entry name" value="Aspartate carbamoyltransferase regulatory subunit, C-terminal domain"/>
    <property type="match status" value="1"/>
</dbReference>
<dbReference type="Gene3D" id="3.30.70.140">
    <property type="entry name" value="Aspartate carbamoyltransferase regulatory subunit, N-terminal domain"/>
    <property type="match status" value="1"/>
</dbReference>
<dbReference type="HAMAP" id="MF_00002">
    <property type="entry name" value="Asp_carb_tr_reg"/>
    <property type="match status" value="1"/>
</dbReference>
<dbReference type="InterPro" id="IPR020545">
    <property type="entry name" value="Asp_carbamoyltransf_reg_N"/>
</dbReference>
<dbReference type="InterPro" id="IPR002801">
    <property type="entry name" value="Asp_carbamoylTrfase_reg"/>
</dbReference>
<dbReference type="InterPro" id="IPR020542">
    <property type="entry name" value="Asp_carbamoyltrfase_reg_C"/>
</dbReference>
<dbReference type="InterPro" id="IPR036792">
    <property type="entry name" value="Asp_carbatrfase_reg_C_sf"/>
</dbReference>
<dbReference type="InterPro" id="IPR036793">
    <property type="entry name" value="Asp_carbatrfase_reg_N_sf"/>
</dbReference>
<dbReference type="NCBIfam" id="TIGR00240">
    <property type="entry name" value="ATCase_reg"/>
    <property type="match status" value="1"/>
</dbReference>
<dbReference type="PANTHER" id="PTHR35805">
    <property type="entry name" value="ASPARTATE CARBAMOYLTRANSFERASE REGULATORY CHAIN"/>
    <property type="match status" value="1"/>
</dbReference>
<dbReference type="PANTHER" id="PTHR35805:SF1">
    <property type="entry name" value="ASPARTATE CARBAMOYLTRANSFERASE REGULATORY CHAIN"/>
    <property type="match status" value="1"/>
</dbReference>
<dbReference type="Pfam" id="PF01948">
    <property type="entry name" value="PyrI"/>
    <property type="match status" value="1"/>
</dbReference>
<dbReference type="Pfam" id="PF02748">
    <property type="entry name" value="PyrI_C"/>
    <property type="match status" value="1"/>
</dbReference>
<dbReference type="SUPFAM" id="SSF57825">
    <property type="entry name" value="Aspartate carbamoyltransferase, Regulatory-chain, C-terminal domain"/>
    <property type="match status" value="1"/>
</dbReference>
<dbReference type="SUPFAM" id="SSF54893">
    <property type="entry name" value="Aspartate carbamoyltransferase, Regulatory-chain, N-terminal domain"/>
    <property type="match status" value="1"/>
</dbReference>
<protein>
    <recommendedName>
        <fullName>Aspartate carbamoyltransferase regulatory chain</fullName>
    </recommendedName>
</protein>
<gene>
    <name type="primary">pyrI</name>
    <name type="ordered locus">STM4459</name>
</gene>
<feature type="initiator methionine" description="Removed" evidence="1">
    <location>
        <position position="1"/>
    </location>
</feature>
<feature type="chain" id="PRO_0000142314" description="Aspartate carbamoyltransferase regulatory chain">
    <location>
        <begin position="2"/>
        <end position="153"/>
    </location>
</feature>
<feature type="binding site" evidence="1">
    <location>
        <position position="109"/>
    </location>
    <ligand>
        <name>Zn(2+)</name>
        <dbReference type="ChEBI" id="CHEBI:29105"/>
    </ligand>
</feature>
<feature type="binding site" evidence="1">
    <location>
        <position position="114"/>
    </location>
    <ligand>
        <name>Zn(2+)</name>
        <dbReference type="ChEBI" id="CHEBI:29105"/>
    </ligand>
</feature>
<feature type="binding site" evidence="1">
    <location>
        <position position="138"/>
    </location>
    <ligand>
        <name>Zn(2+)</name>
        <dbReference type="ChEBI" id="CHEBI:29105"/>
    </ligand>
</feature>
<feature type="binding site" evidence="1">
    <location>
        <position position="141"/>
    </location>
    <ligand>
        <name>Zn(2+)</name>
        <dbReference type="ChEBI" id="CHEBI:29105"/>
    </ligand>
</feature>
<proteinExistence type="inferred from homology"/>
<organism>
    <name type="scientific">Salmonella typhimurium (strain LT2 / SGSC1412 / ATCC 700720)</name>
    <dbReference type="NCBI Taxonomy" id="99287"/>
    <lineage>
        <taxon>Bacteria</taxon>
        <taxon>Pseudomonadati</taxon>
        <taxon>Pseudomonadota</taxon>
        <taxon>Gammaproteobacteria</taxon>
        <taxon>Enterobacterales</taxon>
        <taxon>Enterobacteriaceae</taxon>
        <taxon>Salmonella</taxon>
    </lineage>
</organism>
<evidence type="ECO:0000250" key="1"/>
<evidence type="ECO:0000305" key="2"/>